<comment type="function">
    <text evidence="1">NDH shuttles electrons from NAD(P)H:plastoquinone, via FMN and iron-sulfur (Fe-S) centers, to quinones in the photosynthetic chain and possibly in a chloroplast respiratory chain. The immediate electron acceptor for the enzyme in this species is believed to be plastoquinone. Couples the redox reaction to proton translocation, and thus conserves the redox energy in a proton gradient.</text>
</comment>
<comment type="catalytic activity">
    <reaction evidence="1">
        <text>a plastoquinone + NADH + (n+1) H(+)(in) = a plastoquinol + NAD(+) + n H(+)(out)</text>
        <dbReference type="Rhea" id="RHEA:42608"/>
        <dbReference type="Rhea" id="RHEA-COMP:9561"/>
        <dbReference type="Rhea" id="RHEA-COMP:9562"/>
        <dbReference type="ChEBI" id="CHEBI:15378"/>
        <dbReference type="ChEBI" id="CHEBI:17757"/>
        <dbReference type="ChEBI" id="CHEBI:57540"/>
        <dbReference type="ChEBI" id="CHEBI:57945"/>
        <dbReference type="ChEBI" id="CHEBI:62192"/>
    </reaction>
</comment>
<comment type="catalytic activity">
    <reaction evidence="1">
        <text>a plastoquinone + NADPH + (n+1) H(+)(in) = a plastoquinol + NADP(+) + n H(+)(out)</text>
        <dbReference type="Rhea" id="RHEA:42612"/>
        <dbReference type="Rhea" id="RHEA-COMP:9561"/>
        <dbReference type="Rhea" id="RHEA-COMP:9562"/>
        <dbReference type="ChEBI" id="CHEBI:15378"/>
        <dbReference type="ChEBI" id="CHEBI:17757"/>
        <dbReference type="ChEBI" id="CHEBI:57783"/>
        <dbReference type="ChEBI" id="CHEBI:58349"/>
        <dbReference type="ChEBI" id="CHEBI:62192"/>
    </reaction>
</comment>
<comment type="cofactor">
    <cofactor evidence="1">
        <name>[4Fe-4S] cluster</name>
        <dbReference type="ChEBI" id="CHEBI:49883"/>
    </cofactor>
    <text evidence="1">Binds 2 [4Fe-4S] clusters per subunit.</text>
</comment>
<comment type="subunit">
    <text evidence="1">NDH is composed of at least 16 different subunits, 5 of which are encoded in the nucleus.</text>
</comment>
<comment type="subcellular location">
    <subcellularLocation>
        <location evidence="1">Plastid</location>
        <location evidence="1">Chloroplast thylakoid membrane</location>
        <topology evidence="1">Peripheral membrane protein</topology>
    </subcellularLocation>
</comment>
<comment type="similarity">
    <text evidence="1">Belongs to the complex I 23 kDa subunit family.</text>
</comment>
<protein>
    <recommendedName>
        <fullName evidence="1">NAD(P)H-quinone oxidoreductase subunit I, chloroplastic</fullName>
        <ecNumber evidence="1">7.1.1.-</ecNumber>
    </recommendedName>
    <alternativeName>
        <fullName evidence="1">NAD(P)H dehydrogenase subunit I</fullName>
        <shortName evidence="1">NDH subunit I</shortName>
    </alternativeName>
    <alternativeName>
        <fullName evidence="1">NADH-plastoquinone oxidoreductase subunit I</fullName>
    </alternativeName>
</protein>
<reference key="1">
    <citation type="submission" date="2003-01" db="EMBL/GenBank/DDBJ databases">
        <title>Chloroplast DNA phylogeny of tribe Heliantheae (Asteraceae).</title>
        <authorList>
            <person name="Panero J.L."/>
            <person name="Baldwin B.G."/>
            <person name="Schilling E.E."/>
            <person name="Clevinger J.A."/>
        </authorList>
    </citation>
    <scope>NUCLEOTIDE SEQUENCE [GENOMIC DNA]</scope>
</reference>
<organism>
    <name type="scientific">Dugesia mexicana</name>
    <dbReference type="NCBI Taxonomy" id="121910"/>
    <lineage>
        <taxon>Eukaryota</taxon>
        <taxon>Viridiplantae</taxon>
        <taxon>Streptophyta</taxon>
        <taxon>Embryophyta</taxon>
        <taxon>Tracheophyta</taxon>
        <taxon>Spermatophyta</taxon>
        <taxon>Magnoliopsida</taxon>
        <taxon>eudicotyledons</taxon>
        <taxon>Gunneridae</taxon>
        <taxon>Pentapetalae</taxon>
        <taxon>asterids</taxon>
        <taxon>campanulids</taxon>
        <taxon>Asterales</taxon>
        <taxon>Asteraceae</taxon>
        <taxon>Asteroideae</taxon>
        <taxon>Heliantheae alliance</taxon>
        <taxon>Heliantheae</taxon>
        <taxon>Dugesia</taxon>
    </lineage>
</organism>
<gene>
    <name evidence="1" type="primary">ndhI</name>
</gene>
<evidence type="ECO:0000255" key="1">
    <source>
        <dbReference type="HAMAP-Rule" id="MF_01351"/>
    </source>
</evidence>
<geneLocation type="chloroplast"/>
<name>NDHI_DUGME</name>
<feature type="chain" id="PRO_0000250779" description="NAD(P)H-quinone oxidoreductase subunit I, chloroplastic">
    <location>
        <begin position="1"/>
        <end position="166"/>
    </location>
</feature>
<feature type="domain" description="4Fe-4S ferredoxin-type 1" evidence="1">
    <location>
        <begin position="55"/>
        <end position="84"/>
    </location>
</feature>
<feature type="domain" description="4Fe-4S ferredoxin-type 2" evidence="1">
    <location>
        <begin position="95"/>
        <end position="124"/>
    </location>
</feature>
<feature type="binding site" evidence="1">
    <location>
        <position position="64"/>
    </location>
    <ligand>
        <name>[4Fe-4S] cluster</name>
        <dbReference type="ChEBI" id="CHEBI:49883"/>
        <label>1</label>
    </ligand>
</feature>
<feature type="binding site" evidence="1">
    <location>
        <position position="67"/>
    </location>
    <ligand>
        <name>[4Fe-4S] cluster</name>
        <dbReference type="ChEBI" id="CHEBI:49883"/>
        <label>1</label>
    </ligand>
</feature>
<feature type="binding site" evidence="1">
    <location>
        <position position="70"/>
    </location>
    <ligand>
        <name>[4Fe-4S] cluster</name>
        <dbReference type="ChEBI" id="CHEBI:49883"/>
        <label>1</label>
    </ligand>
</feature>
<feature type="binding site" evidence="1">
    <location>
        <position position="74"/>
    </location>
    <ligand>
        <name>[4Fe-4S] cluster</name>
        <dbReference type="ChEBI" id="CHEBI:49883"/>
        <label>2</label>
    </ligand>
</feature>
<feature type="binding site" evidence="1">
    <location>
        <position position="104"/>
    </location>
    <ligand>
        <name>[4Fe-4S] cluster</name>
        <dbReference type="ChEBI" id="CHEBI:49883"/>
        <label>2</label>
    </ligand>
</feature>
<feature type="binding site" evidence="1">
    <location>
        <position position="107"/>
    </location>
    <ligand>
        <name>[4Fe-4S] cluster</name>
        <dbReference type="ChEBI" id="CHEBI:49883"/>
        <label>2</label>
    </ligand>
</feature>
<feature type="binding site" evidence="1">
    <location>
        <position position="110"/>
    </location>
    <ligand>
        <name>[4Fe-4S] cluster</name>
        <dbReference type="ChEBI" id="CHEBI:49883"/>
        <label>2</label>
    </ligand>
</feature>
<feature type="binding site" evidence="1">
    <location>
        <position position="114"/>
    </location>
    <ligand>
        <name>[4Fe-4S] cluster</name>
        <dbReference type="ChEBI" id="CHEBI:49883"/>
        <label>1</label>
    </ligand>
</feature>
<dbReference type="EC" id="7.1.1.-" evidence="1"/>
<dbReference type="EMBL" id="AF383776">
    <property type="protein sequence ID" value="AAN61718.1"/>
    <property type="molecule type" value="Genomic_DNA"/>
</dbReference>
<dbReference type="SMR" id="Q8HVT6"/>
<dbReference type="GO" id="GO:0009535">
    <property type="term" value="C:chloroplast thylakoid membrane"/>
    <property type="evidence" value="ECO:0007669"/>
    <property type="project" value="UniProtKB-SubCell"/>
</dbReference>
<dbReference type="GO" id="GO:0051539">
    <property type="term" value="F:4 iron, 4 sulfur cluster binding"/>
    <property type="evidence" value="ECO:0007669"/>
    <property type="project" value="UniProtKB-KW"/>
</dbReference>
<dbReference type="GO" id="GO:0005506">
    <property type="term" value="F:iron ion binding"/>
    <property type="evidence" value="ECO:0007669"/>
    <property type="project" value="UniProtKB-UniRule"/>
</dbReference>
<dbReference type="GO" id="GO:0008137">
    <property type="term" value="F:NADH dehydrogenase (ubiquinone) activity"/>
    <property type="evidence" value="ECO:0007669"/>
    <property type="project" value="InterPro"/>
</dbReference>
<dbReference type="GO" id="GO:0048038">
    <property type="term" value="F:quinone binding"/>
    <property type="evidence" value="ECO:0007669"/>
    <property type="project" value="UniProtKB-KW"/>
</dbReference>
<dbReference type="GO" id="GO:0019684">
    <property type="term" value="P:photosynthesis, light reaction"/>
    <property type="evidence" value="ECO:0007669"/>
    <property type="project" value="UniProtKB-UniRule"/>
</dbReference>
<dbReference type="FunFam" id="3.30.70.3270:FF:000006">
    <property type="entry name" value="NAD(P)H-quinone oxidoreductase subunit I, chloroplastic"/>
    <property type="match status" value="1"/>
</dbReference>
<dbReference type="Gene3D" id="3.30.70.3270">
    <property type="match status" value="1"/>
</dbReference>
<dbReference type="HAMAP" id="MF_01351">
    <property type="entry name" value="NDH1_NuoI"/>
    <property type="match status" value="1"/>
</dbReference>
<dbReference type="InterPro" id="IPR017896">
    <property type="entry name" value="4Fe4S_Fe-S-bd"/>
</dbReference>
<dbReference type="InterPro" id="IPR017900">
    <property type="entry name" value="4Fe4S_Fe_S_CS"/>
</dbReference>
<dbReference type="InterPro" id="IPR010226">
    <property type="entry name" value="NADH_quinone_OxRdtase_chainI"/>
</dbReference>
<dbReference type="InterPro" id="IPR004497">
    <property type="entry name" value="NDHI"/>
</dbReference>
<dbReference type="NCBIfam" id="TIGR00403">
    <property type="entry name" value="ndhI"/>
    <property type="match status" value="1"/>
</dbReference>
<dbReference type="NCBIfam" id="TIGR01971">
    <property type="entry name" value="NuoI"/>
    <property type="match status" value="1"/>
</dbReference>
<dbReference type="NCBIfam" id="NF004537">
    <property type="entry name" value="PRK05888.1-3"/>
    <property type="match status" value="1"/>
</dbReference>
<dbReference type="PANTHER" id="PTHR47275">
    <property type="entry name" value="NAD(P)H-QUINONE OXIDOREDUCTASE SUBUNIT I, CHLOROPLASTIC"/>
    <property type="match status" value="1"/>
</dbReference>
<dbReference type="PANTHER" id="PTHR47275:SF1">
    <property type="entry name" value="NAD(P)H-QUINONE OXIDOREDUCTASE SUBUNIT I, CHLOROPLASTIC"/>
    <property type="match status" value="1"/>
</dbReference>
<dbReference type="Pfam" id="PF00037">
    <property type="entry name" value="Fer4"/>
    <property type="match status" value="2"/>
</dbReference>
<dbReference type="SUPFAM" id="SSF54862">
    <property type="entry name" value="4Fe-4S ferredoxins"/>
    <property type="match status" value="1"/>
</dbReference>
<dbReference type="PROSITE" id="PS00198">
    <property type="entry name" value="4FE4S_FER_1"/>
    <property type="match status" value="2"/>
</dbReference>
<dbReference type="PROSITE" id="PS51379">
    <property type="entry name" value="4FE4S_FER_2"/>
    <property type="match status" value="2"/>
</dbReference>
<keyword id="KW-0004">4Fe-4S</keyword>
<keyword id="KW-0150">Chloroplast</keyword>
<keyword id="KW-0408">Iron</keyword>
<keyword id="KW-0411">Iron-sulfur</keyword>
<keyword id="KW-0472">Membrane</keyword>
<keyword id="KW-0479">Metal-binding</keyword>
<keyword id="KW-0520">NAD</keyword>
<keyword id="KW-0521">NADP</keyword>
<keyword id="KW-0934">Plastid</keyword>
<keyword id="KW-0618">Plastoquinone</keyword>
<keyword id="KW-0874">Quinone</keyword>
<keyword id="KW-0677">Repeat</keyword>
<keyword id="KW-0793">Thylakoid</keyword>
<keyword id="KW-1278">Translocase</keyword>
<sequence length="166" mass="19475">MFPMVTEFMNYGQQTVRAARYIGQGFMITLSHANRLPVTIQYPYEKLITSERFRGRIHFEFDKCIACEVCVRVCPIDLPVVDWKLETDIRKKRLLNYSIDFGICIFCGNCVEYCPTNCLSMTEEYELSTYDRHELNYNQIALGRLPMSIIDDYTIRTILNLPEIKT</sequence>
<proteinExistence type="inferred from homology"/>
<accession>Q8HVT6</accession>